<protein>
    <recommendedName>
        <fullName evidence="1">D-aminoacyl-tRNA deacylase</fullName>
        <shortName evidence="1">DTD</shortName>
        <ecNumber evidence="1">3.1.1.96</ecNumber>
    </recommendedName>
    <alternativeName>
        <fullName evidence="1">Gly-tRNA(Ala) deacylase</fullName>
    </alternativeName>
</protein>
<comment type="function">
    <text evidence="1">An aminoacyl-tRNA editing enzyme that deacylates mischarged D-aminoacyl-tRNAs. Also deacylates mischarged glycyl-tRNA(Ala), protecting cells against glycine mischarging by AlaRS. Acts via tRNA-based rather than protein-based catalysis; rejects L-amino acids rather than detecting D-amino acids in the active site. By recycling D-aminoacyl-tRNA to D-amino acids and free tRNA molecules, this enzyme counteracts the toxicity associated with the formation of D-aminoacyl-tRNA entities in vivo and helps enforce protein L-homochirality.</text>
</comment>
<comment type="catalytic activity">
    <reaction evidence="1">
        <text>glycyl-tRNA(Ala) + H2O = tRNA(Ala) + glycine + H(+)</text>
        <dbReference type="Rhea" id="RHEA:53744"/>
        <dbReference type="Rhea" id="RHEA-COMP:9657"/>
        <dbReference type="Rhea" id="RHEA-COMP:13640"/>
        <dbReference type="ChEBI" id="CHEBI:15377"/>
        <dbReference type="ChEBI" id="CHEBI:15378"/>
        <dbReference type="ChEBI" id="CHEBI:57305"/>
        <dbReference type="ChEBI" id="CHEBI:78442"/>
        <dbReference type="ChEBI" id="CHEBI:78522"/>
        <dbReference type="EC" id="3.1.1.96"/>
    </reaction>
</comment>
<comment type="catalytic activity">
    <reaction evidence="1">
        <text>a D-aminoacyl-tRNA + H2O = a tRNA + a D-alpha-amino acid + H(+)</text>
        <dbReference type="Rhea" id="RHEA:13953"/>
        <dbReference type="Rhea" id="RHEA-COMP:10123"/>
        <dbReference type="Rhea" id="RHEA-COMP:10124"/>
        <dbReference type="ChEBI" id="CHEBI:15377"/>
        <dbReference type="ChEBI" id="CHEBI:15378"/>
        <dbReference type="ChEBI" id="CHEBI:59871"/>
        <dbReference type="ChEBI" id="CHEBI:78442"/>
        <dbReference type="ChEBI" id="CHEBI:79333"/>
        <dbReference type="EC" id="3.1.1.96"/>
    </reaction>
</comment>
<comment type="subunit">
    <text evidence="1">Homodimer.</text>
</comment>
<comment type="subcellular location">
    <subcellularLocation>
        <location evidence="1">Cytoplasm</location>
    </subcellularLocation>
</comment>
<comment type="domain">
    <text evidence="1">A Gly-cisPro motif from one monomer fits into the active site of the other monomer to allow specific chiral rejection of L-amino acids.</text>
</comment>
<comment type="similarity">
    <text evidence="1">Belongs to the DTD family.</text>
</comment>
<organism>
    <name type="scientific">Escherichia coli (strain 55989 / EAEC)</name>
    <dbReference type="NCBI Taxonomy" id="585055"/>
    <lineage>
        <taxon>Bacteria</taxon>
        <taxon>Pseudomonadati</taxon>
        <taxon>Pseudomonadota</taxon>
        <taxon>Gammaproteobacteria</taxon>
        <taxon>Enterobacterales</taxon>
        <taxon>Enterobacteriaceae</taxon>
        <taxon>Escherichia</taxon>
    </lineage>
</organism>
<sequence length="145" mass="15950">MIALIQRVTRASVTVEGEVTGEIGAGLLVLLGVEKDDDEQKANRLCERVLGYRIFSDAEGKMNLNVQQAGGSVLVVSQFTLAADTERGMRPSFSKGASPDRAEALYDYFVERCRQQEMNTQTGRFAADMQVSLVNDGPVTFWLQV</sequence>
<dbReference type="EC" id="3.1.1.96" evidence="1"/>
<dbReference type="EMBL" id="CU928145">
    <property type="protein sequence ID" value="CAV01056.1"/>
    <property type="molecule type" value="Genomic_DNA"/>
</dbReference>
<dbReference type="RefSeq" id="WP_000560983.1">
    <property type="nucleotide sequence ID" value="NC_011748.1"/>
</dbReference>
<dbReference type="SMR" id="B7L9D6"/>
<dbReference type="GeneID" id="93778051"/>
<dbReference type="KEGG" id="eck:EC55989_4361"/>
<dbReference type="HOGENOM" id="CLU_076901_1_0_6"/>
<dbReference type="Proteomes" id="UP000000746">
    <property type="component" value="Chromosome"/>
</dbReference>
<dbReference type="GO" id="GO:0005737">
    <property type="term" value="C:cytoplasm"/>
    <property type="evidence" value="ECO:0007669"/>
    <property type="project" value="UniProtKB-SubCell"/>
</dbReference>
<dbReference type="GO" id="GO:0051500">
    <property type="term" value="F:D-tyrosyl-tRNA(Tyr) deacylase activity"/>
    <property type="evidence" value="ECO:0007669"/>
    <property type="project" value="TreeGrafter"/>
</dbReference>
<dbReference type="GO" id="GO:0106026">
    <property type="term" value="F:Gly-tRNA(Ala) deacylase activity"/>
    <property type="evidence" value="ECO:0007669"/>
    <property type="project" value="UniProtKB-UniRule"/>
</dbReference>
<dbReference type="GO" id="GO:0043908">
    <property type="term" value="F:Ser(Gly)-tRNA(Ala) hydrolase activity"/>
    <property type="evidence" value="ECO:0007669"/>
    <property type="project" value="UniProtKB-UniRule"/>
</dbReference>
<dbReference type="GO" id="GO:0000049">
    <property type="term" value="F:tRNA binding"/>
    <property type="evidence" value="ECO:0007669"/>
    <property type="project" value="UniProtKB-UniRule"/>
</dbReference>
<dbReference type="GO" id="GO:0019478">
    <property type="term" value="P:D-amino acid catabolic process"/>
    <property type="evidence" value="ECO:0007669"/>
    <property type="project" value="UniProtKB-UniRule"/>
</dbReference>
<dbReference type="CDD" id="cd00563">
    <property type="entry name" value="Dtyr_deacylase"/>
    <property type="match status" value="1"/>
</dbReference>
<dbReference type="FunFam" id="3.50.80.10:FF:000001">
    <property type="entry name" value="D-aminoacyl-tRNA deacylase"/>
    <property type="match status" value="1"/>
</dbReference>
<dbReference type="Gene3D" id="3.50.80.10">
    <property type="entry name" value="D-tyrosyl-tRNA(Tyr) deacylase"/>
    <property type="match status" value="1"/>
</dbReference>
<dbReference type="HAMAP" id="MF_00518">
    <property type="entry name" value="Deacylase_Dtd"/>
    <property type="match status" value="1"/>
</dbReference>
<dbReference type="InterPro" id="IPR003732">
    <property type="entry name" value="Daa-tRNA_deacyls_DTD"/>
</dbReference>
<dbReference type="InterPro" id="IPR023509">
    <property type="entry name" value="DTD-like_sf"/>
</dbReference>
<dbReference type="NCBIfam" id="TIGR00256">
    <property type="entry name" value="D-aminoacyl-tRNA deacylase"/>
    <property type="match status" value="1"/>
</dbReference>
<dbReference type="PANTHER" id="PTHR10472:SF5">
    <property type="entry name" value="D-AMINOACYL-TRNA DEACYLASE 1"/>
    <property type="match status" value="1"/>
</dbReference>
<dbReference type="PANTHER" id="PTHR10472">
    <property type="entry name" value="D-TYROSYL-TRNA TYR DEACYLASE"/>
    <property type="match status" value="1"/>
</dbReference>
<dbReference type="Pfam" id="PF02580">
    <property type="entry name" value="Tyr_Deacylase"/>
    <property type="match status" value="1"/>
</dbReference>
<dbReference type="SUPFAM" id="SSF69500">
    <property type="entry name" value="DTD-like"/>
    <property type="match status" value="1"/>
</dbReference>
<evidence type="ECO:0000255" key="1">
    <source>
        <dbReference type="HAMAP-Rule" id="MF_00518"/>
    </source>
</evidence>
<feature type="chain" id="PRO_1000146196" description="D-aminoacyl-tRNA deacylase">
    <location>
        <begin position="1"/>
        <end position="145"/>
    </location>
</feature>
<feature type="short sequence motif" description="Gly-cisPro motif, important for rejection of L-amino acids" evidence="1">
    <location>
        <begin position="137"/>
        <end position="138"/>
    </location>
</feature>
<reference key="1">
    <citation type="journal article" date="2009" name="PLoS Genet.">
        <title>Organised genome dynamics in the Escherichia coli species results in highly diverse adaptive paths.</title>
        <authorList>
            <person name="Touchon M."/>
            <person name="Hoede C."/>
            <person name="Tenaillon O."/>
            <person name="Barbe V."/>
            <person name="Baeriswyl S."/>
            <person name="Bidet P."/>
            <person name="Bingen E."/>
            <person name="Bonacorsi S."/>
            <person name="Bouchier C."/>
            <person name="Bouvet O."/>
            <person name="Calteau A."/>
            <person name="Chiapello H."/>
            <person name="Clermont O."/>
            <person name="Cruveiller S."/>
            <person name="Danchin A."/>
            <person name="Diard M."/>
            <person name="Dossat C."/>
            <person name="Karoui M.E."/>
            <person name="Frapy E."/>
            <person name="Garry L."/>
            <person name="Ghigo J.M."/>
            <person name="Gilles A.M."/>
            <person name="Johnson J."/>
            <person name="Le Bouguenec C."/>
            <person name="Lescat M."/>
            <person name="Mangenot S."/>
            <person name="Martinez-Jehanne V."/>
            <person name="Matic I."/>
            <person name="Nassif X."/>
            <person name="Oztas S."/>
            <person name="Petit M.A."/>
            <person name="Pichon C."/>
            <person name="Rouy Z."/>
            <person name="Ruf C.S."/>
            <person name="Schneider D."/>
            <person name="Tourret J."/>
            <person name="Vacherie B."/>
            <person name="Vallenet D."/>
            <person name="Medigue C."/>
            <person name="Rocha E.P.C."/>
            <person name="Denamur E."/>
        </authorList>
    </citation>
    <scope>NUCLEOTIDE SEQUENCE [LARGE SCALE GENOMIC DNA]</scope>
    <source>
        <strain>55989 / EAEC</strain>
    </source>
</reference>
<name>DTD_ECO55</name>
<proteinExistence type="inferred from homology"/>
<gene>
    <name evidence="1" type="primary">dtd</name>
    <name type="ordered locus">EC55989_4361</name>
</gene>
<keyword id="KW-0963">Cytoplasm</keyword>
<keyword id="KW-0378">Hydrolase</keyword>
<keyword id="KW-1185">Reference proteome</keyword>
<keyword id="KW-0694">RNA-binding</keyword>
<keyword id="KW-0820">tRNA-binding</keyword>
<accession>B7L9D6</accession>